<dbReference type="EMBL" id="AL009126">
    <property type="protein sequence ID" value="CAX52686.1"/>
    <property type="molecule type" value="Genomic_DNA"/>
</dbReference>
<dbReference type="RefSeq" id="WP_009968115.1">
    <property type="nucleotide sequence ID" value="NZ_OZ025638.1"/>
</dbReference>
<dbReference type="RefSeq" id="YP_003097780.1">
    <property type="nucleotide sequence ID" value="NC_000964.3"/>
</dbReference>
<dbReference type="SMR" id="C0H3Q7"/>
<dbReference type="PaxDb" id="224308-BSU32469"/>
<dbReference type="EnsemblBacteria" id="CAX52686">
    <property type="protein sequence ID" value="CAX52686"/>
    <property type="gene ID" value="BSU_32469"/>
</dbReference>
<dbReference type="GeneID" id="8303056"/>
<dbReference type="KEGG" id="bsu:BSU32469"/>
<dbReference type="PATRIC" id="fig|224308.179.peg.3515"/>
<dbReference type="InParanoid" id="C0H3Q7"/>
<dbReference type="BioCyc" id="BSUB:BSU32469-MONOMER"/>
<dbReference type="Proteomes" id="UP000001570">
    <property type="component" value="Chromosome"/>
</dbReference>
<dbReference type="GO" id="GO:0016020">
    <property type="term" value="C:membrane"/>
    <property type="evidence" value="ECO:0007669"/>
    <property type="project" value="UniProtKB-SubCell"/>
</dbReference>
<dbReference type="InterPro" id="IPR010070">
    <property type="entry name" value="YjcZ-like"/>
</dbReference>
<dbReference type="NCBIfam" id="TIGR01732">
    <property type="entry name" value="tiny_TM_bacill"/>
    <property type="match status" value="1"/>
</dbReference>
<dbReference type="Pfam" id="PF09680">
    <property type="entry name" value="YjcZ_2"/>
    <property type="match status" value="1"/>
</dbReference>
<sequence>MGFYNSGGYSGNSGYSNGFGSSFALIVVLFILLIIVGAAIFNY</sequence>
<accession>C0H3Q7</accession>
<feature type="chain" id="PRO_0000384385" description="Uncharacterized membrane protein YuzJ">
    <location>
        <begin position="1"/>
        <end position="43"/>
    </location>
</feature>
<feature type="transmembrane region" description="Helical" evidence="1">
    <location>
        <begin position="21"/>
        <end position="41"/>
    </location>
</feature>
<protein>
    <recommendedName>
        <fullName evidence="2">Uncharacterized membrane protein YuzJ</fullName>
    </recommendedName>
</protein>
<organism>
    <name type="scientific">Bacillus subtilis (strain 168)</name>
    <dbReference type="NCBI Taxonomy" id="224308"/>
    <lineage>
        <taxon>Bacteria</taxon>
        <taxon>Bacillati</taxon>
        <taxon>Bacillota</taxon>
        <taxon>Bacilli</taxon>
        <taxon>Bacillales</taxon>
        <taxon>Bacillaceae</taxon>
        <taxon>Bacillus</taxon>
    </lineage>
</organism>
<comment type="subcellular location">
    <subcellularLocation>
        <location evidence="1">Membrane</location>
        <topology evidence="1">Single-pass membrane protein</topology>
    </subcellularLocation>
</comment>
<comment type="similarity">
    <text evidence="2">Belongs to the SscA family.</text>
</comment>
<evidence type="ECO:0000255" key="1"/>
<evidence type="ECO:0000305" key="2"/>
<reference key="1">
    <citation type="journal article" date="1997" name="Nature">
        <title>The complete genome sequence of the Gram-positive bacterium Bacillus subtilis.</title>
        <authorList>
            <person name="Kunst F."/>
            <person name="Ogasawara N."/>
            <person name="Moszer I."/>
            <person name="Albertini A.M."/>
            <person name="Alloni G."/>
            <person name="Azevedo V."/>
            <person name="Bertero M.G."/>
            <person name="Bessieres P."/>
            <person name="Bolotin A."/>
            <person name="Borchert S."/>
            <person name="Borriss R."/>
            <person name="Boursier L."/>
            <person name="Brans A."/>
            <person name="Braun M."/>
            <person name="Brignell S.C."/>
            <person name="Bron S."/>
            <person name="Brouillet S."/>
            <person name="Bruschi C.V."/>
            <person name="Caldwell B."/>
            <person name="Capuano V."/>
            <person name="Carter N.M."/>
            <person name="Choi S.-K."/>
            <person name="Codani J.-J."/>
            <person name="Connerton I.F."/>
            <person name="Cummings N.J."/>
            <person name="Daniel R.A."/>
            <person name="Denizot F."/>
            <person name="Devine K.M."/>
            <person name="Duesterhoeft A."/>
            <person name="Ehrlich S.D."/>
            <person name="Emmerson P.T."/>
            <person name="Entian K.-D."/>
            <person name="Errington J."/>
            <person name="Fabret C."/>
            <person name="Ferrari E."/>
            <person name="Foulger D."/>
            <person name="Fritz C."/>
            <person name="Fujita M."/>
            <person name="Fujita Y."/>
            <person name="Fuma S."/>
            <person name="Galizzi A."/>
            <person name="Galleron N."/>
            <person name="Ghim S.-Y."/>
            <person name="Glaser P."/>
            <person name="Goffeau A."/>
            <person name="Golightly E.J."/>
            <person name="Grandi G."/>
            <person name="Guiseppi G."/>
            <person name="Guy B.J."/>
            <person name="Haga K."/>
            <person name="Haiech J."/>
            <person name="Harwood C.R."/>
            <person name="Henaut A."/>
            <person name="Hilbert H."/>
            <person name="Holsappel S."/>
            <person name="Hosono S."/>
            <person name="Hullo M.-F."/>
            <person name="Itaya M."/>
            <person name="Jones L.-M."/>
            <person name="Joris B."/>
            <person name="Karamata D."/>
            <person name="Kasahara Y."/>
            <person name="Klaerr-Blanchard M."/>
            <person name="Klein C."/>
            <person name="Kobayashi Y."/>
            <person name="Koetter P."/>
            <person name="Koningstein G."/>
            <person name="Krogh S."/>
            <person name="Kumano M."/>
            <person name="Kurita K."/>
            <person name="Lapidus A."/>
            <person name="Lardinois S."/>
            <person name="Lauber J."/>
            <person name="Lazarevic V."/>
            <person name="Lee S.-M."/>
            <person name="Levine A."/>
            <person name="Liu H."/>
            <person name="Masuda S."/>
            <person name="Mauel C."/>
            <person name="Medigue C."/>
            <person name="Medina N."/>
            <person name="Mellado R.P."/>
            <person name="Mizuno M."/>
            <person name="Moestl D."/>
            <person name="Nakai S."/>
            <person name="Noback M."/>
            <person name="Noone D."/>
            <person name="O'Reilly M."/>
            <person name="Ogawa K."/>
            <person name="Ogiwara A."/>
            <person name="Oudega B."/>
            <person name="Park S.-H."/>
            <person name="Parro V."/>
            <person name="Pohl T.M."/>
            <person name="Portetelle D."/>
            <person name="Porwollik S."/>
            <person name="Prescott A.M."/>
            <person name="Presecan E."/>
            <person name="Pujic P."/>
            <person name="Purnelle B."/>
            <person name="Rapoport G."/>
            <person name="Rey M."/>
            <person name="Reynolds S."/>
            <person name="Rieger M."/>
            <person name="Rivolta C."/>
            <person name="Rocha E."/>
            <person name="Roche B."/>
            <person name="Rose M."/>
            <person name="Sadaie Y."/>
            <person name="Sato T."/>
            <person name="Scanlan E."/>
            <person name="Schleich S."/>
            <person name="Schroeter R."/>
            <person name="Scoffone F."/>
            <person name="Sekiguchi J."/>
            <person name="Sekowska A."/>
            <person name="Seror S.J."/>
            <person name="Serror P."/>
            <person name="Shin B.-S."/>
            <person name="Soldo B."/>
            <person name="Sorokin A."/>
            <person name="Tacconi E."/>
            <person name="Takagi T."/>
            <person name="Takahashi H."/>
            <person name="Takemaru K."/>
            <person name="Takeuchi M."/>
            <person name="Tamakoshi A."/>
            <person name="Tanaka T."/>
            <person name="Terpstra P."/>
            <person name="Tognoni A."/>
            <person name="Tosato V."/>
            <person name="Uchiyama S."/>
            <person name="Vandenbol M."/>
            <person name="Vannier F."/>
            <person name="Vassarotti A."/>
            <person name="Viari A."/>
            <person name="Wambutt R."/>
            <person name="Wedler E."/>
            <person name="Wedler H."/>
            <person name="Weitzenegger T."/>
            <person name="Winters P."/>
            <person name="Wipat A."/>
            <person name="Yamamoto H."/>
            <person name="Yamane K."/>
            <person name="Yasumoto K."/>
            <person name="Yata K."/>
            <person name="Yoshida K."/>
            <person name="Yoshikawa H.-F."/>
            <person name="Zumstein E."/>
            <person name="Yoshikawa H."/>
            <person name="Danchin A."/>
        </authorList>
    </citation>
    <scope>NUCLEOTIDE SEQUENCE [LARGE SCALE GENOMIC DNA]</scope>
    <source>
        <strain>168</strain>
    </source>
</reference>
<name>YUZJ_BACSU</name>
<keyword id="KW-0472">Membrane</keyword>
<keyword id="KW-1185">Reference proteome</keyword>
<keyword id="KW-0812">Transmembrane</keyword>
<keyword id="KW-1133">Transmembrane helix</keyword>
<gene>
    <name type="primary">yuzJ</name>
    <name type="ordered locus">BSU32469</name>
</gene>
<proteinExistence type="inferred from homology"/>